<sequence length="148" mass="15276">MFDVTLLILLGLAALGFVSHNTTVAVSILVLIIVRVTPLSTFFPWIEKQGLTIGIIILTIGVMAPIASGSLPPSTLIHSFFNWKSLVAIAVGVIVSWLGGRGVTLMGSQPQLVAGLLVGTVLGVALFRGVPVGPLIAAGLVSLIVGKQ</sequence>
<evidence type="ECO:0000255" key="1">
    <source>
        <dbReference type="HAMAP-Rule" id="MF_01874"/>
    </source>
</evidence>
<comment type="subcellular location">
    <subcellularLocation>
        <location evidence="1">Cell membrane</location>
        <topology evidence="1">Multi-pass membrane protein</topology>
    </subcellularLocation>
</comment>
<comment type="similarity">
    <text evidence="1">Belongs to the UPF0756 family.</text>
</comment>
<organism>
    <name type="scientific">Escherichia fergusonii (strain ATCC 35469 / DSM 13698 / CCUG 18766 / IAM 14443 / JCM 21226 / LMG 7866 / NBRC 102419 / NCTC 12128 / CDC 0568-73)</name>
    <dbReference type="NCBI Taxonomy" id="585054"/>
    <lineage>
        <taxon>Bacteria</taxon>
        <taxon>Pseudomonadati</taxon>
        <taxon>Pseudomonadota</taxon>
        <taxon>Gammaproteobacteria</taxon>
        <taxon>Enterobacterales</taxon>
        <taxon>Enterobacteriaceae</taxon>
        <taxon>Escherichia</taxon>
    </lineage>
</organism>
<proteinExistence type="inferred from homology"/>
<protein>
    <recommendedName>
        <fullName evidence="1">UPF0756 membrane protein YeaL</fullName>
    </recommendedName>
</protein>
<accession>B7LSP0</accession>
<dbReference type="EMBL" id="CU928158">
    <property type="protein sequence ID" value="CAQ89326.1"/>
    <property type="molecule type" value="Genomic_DNA"/>
</dbReference>
<dbReference type="RefSeq" id="WP_000460717.1">
    <property type="nucleotide sequence ID" value="NC_011740.1"/>
</dbReference>
<dbReference type="KEGG" id="efe:EFER_1811"/>
<dbReference type="HOGENOM" id="CLU_125889_0_0_6"/>
<dbReference type="OrthoDB" id="80306at2"/>
<dbReference type="Proteomes" id="UP000000745">
    <property type="component" value="Chromosome"/>
</dbReference>
<dbReference type="GO" id="GO:0005886">
    <property type="term" value="C:plasma membrane"/>
    <property type="evidence" value="ECO:0007669"/>
    <property type="project" value="UniProtKB-SubCell"/>
</dbReference>
<dbReference type="HAMAP" id="MF_01874">
    <property type="entry name" value="UPF0756"/>
    <property type="match status" value="1"/>
</dbReference>
<dbReference type="InterPro" id="IPR007382">
    <property type="entry name" value="UPF0756_TM"/>
</dbReference>
<dbReference type="PANTHER" id="PTHR38452">
    <property type="entry name" value="UPF0756 MEMBRANE PROTEIN YEAL"/>
    <property type="match status" value="1"/>
</dbReference>
<dbReference type="PANTHER" id="PTHR38452:SF1">
    <property type="entry name" value="UPF0756 MEMBRANE PROTEIN YEAL"/>
    <property type="match status" value="1"/>
</dbReference>
<dbReference type="Pfam" id="PF04284">
    <property type="entry name" value="DUF441"/>
    <property type="match status" value="1"/>
</dbReference>
<gene>
    <name evidence="1" type="primary">yeaL</name>
    <name type="ordered locus">EFER_1811</name>
</gene>
<reference key="1">
    <citation type="journal article" date="2009" name="PLoS Genet.">
        <title>Organised genome dynamics in the Escherichia coli species results in highly diverse adaptive paths.</title>
        <authorList>
            <person name="Touchon M."/>
            <person name="Hoede C."/>
            <person name="Tenaillon O."/>
            <person name="Barbe V."/>
            <person name="Baeriswyl S."/>
            <person name="Bidet P."/>
            <person name="Bingen E."/>
            <person name="Bonacorsi S."/>
            <person name="Bouchier C."/>
            <person name="Bouvet O."/>
            <person name="Calteau A."/>
            <person name="Chiapello H."/>
            <person name="Clermont O."/>
            <person name="Cruveiller S."/>
            <person name="Danchin A."/>
            <person name="Diard M."/>
            <person name="Dossat C."/>
            <person name="Karoui M.E."/>
            <person name="Frapy E."/>
            <person name="Garry L."/>
            <person name="Ghigo J.M."/>
            <person name="Gilles A.M."/>
            <person name="Johnson J."/>
            <person name="Le Bouguenec C."/>
            <person name="Lescat M."/>
            <person name="Mangenot S."/>
            <person name="Martinez-Jehanne V."/>
            <person name="Matic I."/>
            <person name="Nassif X."/>
            <person name="Oztas S."/>
            <person name="Petit M.A."/>
            <person name="Pichon C."/>
            <person name="Rouy Z."/>
            <person name="Ruf C.S."/>
            <person name="Schneider D."/>
            <person name="Tourret J."/>
            <person name="Vacherie B."/>
            <person name="Vallenet D."/>
            <person name="Medigue C."/>
            <person name="Rocha E.P.C."/>
            <person name="Denamur E."/>
        </authorList>
    </citation>
    <scope>NUCLEOTIDE SEQUENCE [LARGE SCALE GENOMIC DNA]</scope>
    <source>
        <strain>ATCC 35469 / DSM 13698 / BCRC 15582 / CCUG 18766 / IAM 14443 / JCM 21226 / LMG 7866 / NBRC 102419 / NCTC 12128 / CDC 0568-73</strain>
    </source>
</reference>
<keyword id="KW-1003">Cell membrane</keyword>
<keyword id="KW-0472">Membrane</keyword>
<keyword id="KW-0812">Transmembrane</keyword>
<keyword id="KW-1133">Transmembrane helix</keyword>
<feature type="chain" id="PRO_0000388874" description="UPF0756 membrane protein YeaL">
    <location>
        <begin position="1"/>
        <end position="148"/>
    </location>
</feature>
<feature type="transmembrane region" description="Helical" evidence="1">
    <location>
        <begin position="14"/>
        <end position="34"/>
    </location>
</feature>
<feature type="transmembrane region" description="Helical" evidence="1">
    <location>
        <begin position="51"/>
        <end position="71"/>
    </location>
</feature>
<feature type="transmembrane region" description="Helical" evidence="1">
    <location>
        <begin position="80"/>
        <end position="100"/>
    </location>
</feature>
<feature type="transmembrane region" description="Helical" evidence="1">
    <location>
        <begin position="121"/>
        <end position="141"/>
    </location>
</feature>
<name>YEAL_ESCF3</name>